<organism>
    <name type="scientific">Streptococcus pneumoniae (strain JJA)</name>
    <dbReference type="NCBI Taxonomy" id="488222"/>
    <lineage>
        <taxon>Bacteria</taxon>
        <taxon>Bacillati</taxon>
        <taxon>Bacillota</taxon>
        <taxon>Bacilli</taxon>
        <taxon>Lactobacillales</taxon>
        <taxon>Streptococcaceae</taxon>
        <taxon>Streptococcus</taxon>
    </lineage>
</organism>
<proteinExistence type="inferred from homology"/>
<gene>
    <name evidence="1" type="primary">argH</name>
    <name type="ordered locus">SPJ_0138</name>
</gene>
<feature type="chain" id="PRO_1000116348" description="Argininosuccinate lyase">
    <location>
        <begin position="1"/>
        <end position="463"/>
    </location>
</feature>
<sequence length="463" mass="52312">MAKNTKLWGGRFEGTVEDWVERFGASISFDQKLAKFDVIGSLAHVQMLGQTGILSLEESEKIQVGLKELLEELEAGQLDFDIANEDIHMNMEVLLTEKIGPLAGKLHTARSRNDQVATDMHLYLKEQLGYVLDKLAHLKGVLLDLAENHVATIMPGYTHLQHAQPISFAYHLMAYYNMFQRDSERFEFNQKHTDLCPLGAAALAGTTFPIDRQLSSDLLEFKQPYTNSLDAVSDRDFILEFLSNASILMMHMSRFCEEMINWCSFEYQFITLSDTFTTGSSIMPQKKNPDMAELIRGKTGRVYGHLFGLLTVMKSLPLAYNKDLQEDKEGMFDTVETILNSLDVLAGMLSSLQVNKEKMQESTEKDFSNATELADYLAGKGLPFREAHEVVGRLVLDSIKSAKNLQDWTLEELQTYHSLITEDIYVYLQPKTAVQRRNSLGGTGFDQVEYQIAVAKKANEAKK</sequence>
<comment type="catalytic activity">
    <reaction evidence="1">
        <text>2-(N(omega)-L-arginino)succinate = fumarate + L-arginine</text>
        <dbReference type="Rhea" id="RHEA:24020"/>
        <dbReference type="ChEBI" id="CHEBI:29806"/>
        <dbReference type="ChEBI" id="CHEBI:32682"/>
        <dbReference type="ChEBI" id="CHEBI:57472"/>
        <dbReference type="EC" id="4.3.2.1"/>
    </reaction>
</comment>
<comment type="pathway">
    <text evidence="1">Amino-acid biosynthesis; L-arginine biosynthesis; L-arginine from L-ornithine and carbamoyl phosphate: step 3/3.</text>
</comment>
<comment type="subcellular location">
    <subcellularLocation>
        <location evidence="1">Cytoplasm</location>
    </subcellularLocation>
</comment>
<comment type="similarity">
    <text evidence="1">Belongs to the lyase 1 family. Argininosuccinate lyase subfamily.</text>
</comment>
<accession>C1CBS9</accession>
<name>ARLY_STRZJ</name>
<keyword id="KW-0028">Amino-acid biosynthesis</keyword>
<keyword id="KW-0055">Arginine biosynthesis</keyword>
<keyword id="KW-0963">Cytoplasm</keyword>
<keyword id="KW-0456">Lyase</keyword>
<evidence type="ECO:0000255" key="1">
    <source>
        <dbReference type="HAMAP-Rule" id="MF_00006"/>
    </source>
</evidence>
<dbReference type="EC" id="4.3.2.1" evidence="1"/>
<dbReference type="EMBL" id="CP000919">
    <property type="protein sequence ID" value="ACO18161.1"/>
    <property type="molecule type" value="Genomic_DNA"/>
</dbReference>
<dbReference type="RefSeq" id="WP_001107615.1">
    <property type="nucleotide sequence ID" value="NC_012466.1"/>
</dbReference>
<dbReference type="SMR" id="C1CBS9"/>
<dbReference type="KEGG" id="sjj:SPJ_0138"/>
<dbReference type="HOGENOM" id="CLU_027272_2_3_9"/>
<dbReference type="UniPathway" id="UPA00068">
    <property type="reaction ID" value="UER00114"/>
</dbReference>
<dbReference type="Proteomes" id="UP000002206">
    <property type="component" value="Chromosome"/>
</dbReference>
<dbReference type="GO" id="GO:0005829">
    <property type="term" value="C:cytosol"/>
    <property type="evidence" value="ECO:0007669"/>
    <property type="project" value="TreeGrafter"/>
</dbReference>
<dbReference type="GO" id="GO:0004056">
    <property type="term" value="F:argininosuccinate lyase activity"/>
    <property type="evidence" value="ECO:0007669"/>
    <property type="project" value="UniProtKB-UniRule"/>
</dbReference>
<dbReference type="GO" id="GO:0042450">
    <property type="term" value="P:arginine biosynthetic process via ornithine"/>
    <property type="evidence" value="ECO:0007669"/>
    <property type="project" value="InterPro"/>
</dbReference>
<dbReference type="GO" id="GO:0006526">
    <property type="term" value="P:L-arginine biosynthetic process"/>
    <property type="evidence" value="ECO:0007669"/>
    <property type="project" value="UniProtKB-UniRule"/>
</dbReference>
<dbReference type="CDD" id="cd01359">
    <property type="entry name" value="Argininosuccinate_lyase"/>
    <property type="match status" value="1"/>
</dbReference>
<dbReference type="FunFam" id="1.10.275.10:FF:000002">
    <property type="entry name" value="Argininosuccinate lyase"/>
    <property type="match status" value="1"/>
</dbReference>
<dbReference type="FunFam" id="1.10.40.30:FF:000001">
    <property type="entry name" value="Argininosuccinate lyase"/>
    <property type="match status" value="1"/>
</dbReference>
<dbReference type="FunFam" id="1.20.200.10:FF:000002">
    <property type="entry name" value="Argininosuccinate lyase"/>
    <property type="match status" value="1"/>
</dbReference>
<dbReference type="Gene3D" id="1.10.40.30">
    <property type="entry name" value="Fumarase/aspartase (C-terminal domain)"/>
    <property type="match status" value="1"/>
</dbReference>
<dbReference type="Gene3D" id="1.20.200.10">
    <property type="entry name" value="Fumarase/aspartase (Central domain)"/>
    <property type="match status" value="1"/>
</dbReference>
<dbReference type="Gene3D" id="1.10.275.10">
    <property type="entry name" value="Fumarase/aspartase (N-terminal domain)"/>
    <property type="match status" value="1"/>
</dbReference>
<dbReference type="HAMAP" id="MF_00006">
    <property type="entry name" value="Arg_succ_lyase"/>
    <property type="match status" value="1"/>
</dbReference>
<dbReference type="InterPro" id="IPR029419">
    <property type="entry name" value="Arg_succ_lyase_C"/>
</dbReference>
<dbReference type="InterPro" id="IPR009049">
    <property type="entry name" value="Argininosuccinate_lyase"/>
</dbReference>
<dbReference type="InterPro" id="IPR024083">
    <property type="entry name" value="Fumarase/histidase_N"/>
</dbReference>
<dbReference type="InterPro" id="IPR020557">
    <property type="entry name" value="Fumarate_lyase_CS"/>
</dbReference>
<dbReference type="InterPro" id="IPR000362">
    <property type="entry name" value="Fumarate_lyase_fam"/>
</dbReference>
<dbReference type="InterPro" id="IPR022761">
    <property type="entry name" value="Fumarate_lyase_N"/>
</dbReference>
<dbReference type="InterPro" id="IPR008948">
    <property type="entry name" value="L-Aspartase-like"/>
</dbReference>
<dbReference type="NCBIfam" id="TIGR00838">
    <property type="entry name" value="argH"/>
    <property type="match status" value="1"/>
</dbReference>
<dbReference type="PANTHER" id="PTHR43814">
    <property type="entry name" value="ARGININOSUCCINATE LYASE"/>
    <property type="match status" value="1"/>
</dbReference>
<dbReference type="PANTHER" id="PTHR43814:SF1">
    <property type="entry name" value="ARGININOSUCCINATE LYASE"/>
    <property type="match status" value="1"/>
</dbReference>
<dbReference type="Pfam" id="PF14698">
    <property type="entry name" value="ASL_C2"/>
    <property type="match status" value="1"/>
</dbReference>
<dbReference type="Pfam" id="PF00206">
    <property type="entry name" value="Lyase_1"/>
    <property type="match status" value="1"/>
</dbReference>
<dbReference type="PRINTS" id="PR00145">
    <property type="entry name" value="ARGSUCLYASE"/>
</dbReference>
<dbReference type="PRINTS" id="PR00149">
    <property type="entry name" value="FUMRATELYASE"/>
</dbReference>
<dbReference type="SUPFAM" id="SSF48557">
    <property type="entry name" value="L-aspartase-like"/>
    <property type="match status" value="1"/>
</dbReference>
<dbReference type="PROSITE" id="PS00163">
    <property type="entry name" value="FUMARATE_LYASES"/>
    <property type="match status" value="1"/>
</dbReference>
<reference key="1">
    <citation type="journal article" date="2010" name="Genome Biol.">
        <title>Structure and dynamics of the pan-genome of Streptococcus pneumoniae and closely related species.</title>
        <authorList>
            <person name="Donati C."/>
            <person name="Hiller N.L."/>
            <person name="Tettelin H."/>
            <person name="Muzzi A."/>
            <person name="Croucher N.J."/>
            <person name="Angiuoli S.V."/>
            <person name="Oggioni M."/>
            <person name="Dunning Hotopp J.C."/>
            <person name="Hu F.Z."/>
            <person name="Riley D.R."/>
            <person name="Covacci A."/>
            <person name="Mitchell T.J."/>
            <person name="Bentley S.D."/>
            <person name="Kilian M."/>
            <person name="Ehrlich G.D."/>
            <person name="Rappuoli R."/>
            <person name="Moxon E.R."/>
            <person name="Masignani V."/>
        </authorList>
    </citation>
    <scope>NUCLEOTIDE SEQUENCE [LARGE SCALE GENOMIC DNA]</scope>
    <source>
        <strain>JJA</strain>
    </source>
</reference>
<protein>
    <recommendedName>
        <fullName evidence="1">Argininosuccinate lyase</fullName>
        <shortName evidence="1">ASAL</shortName>
        <ecNumber evidence="1">4.3.2.1</ecNumber>
    </recommendedName>
    <alternativeName>
        <fullName evidence="1">Arginosuccinase</fullName>
    </alternativeName>
</protein>